<evidence type="ECO:0000255" key="1">
    <source>
        <dbReference type="HAMAP-Rule" id="MF_02019"/>
    </source>
</evidence>
<name>MURF_MYCBO</name>
<dbReference type="EC" id="6.3.2.10" evidence="1"/>
<dbReference type="EMBL" id="LT708304">
    <property type="protein sequence ID" value="SIU00789.1"/>
    <property type="molecule type" value="Genomic_DNA"/>
</dbReference>
<dbReference type="RefSeq" id="NP_855830.1">
    <property type="nucleotide sequence ID" value="NC_002945.3"/>
</dbReference>
<dbReference type="RefSeq" id="WP_003411187.1">
    <property type="nucleotide sequence ID" value="NC_002945.4"/>
</dbReference>
<dbReference type="SMR" id="P0A5L5"/>
<dbReference type="KEGG" id="mbo:BQ2027_MB2181C"/>
<dbReference type="PATRIC" id="fig|233413.5.peg.2397"/>
<dbReference type="UniPathway" id="UPA00219"/>
<dbReference type="Proteomes" id="UP000001419">
    <property type="component" value="Chromosome"/>
</dbReference>
<dbReference type="GO" id="GO:0005737">
    <property type="term" value="C:cytoplasm"/>
    <property type="evidence" value="ECO:0007669"/>
    <property type="project" value="UniProtKB-SubCell"/>
</dbReference>
<dbReference type="GO" id="GO:0005524">
    <property type="term" value="F:ATP binding"/>
    <property type="evidence" value="ECO:0007669"/>
    <property type="project" value="UniProtKB-UniRule"/>
</dbReference>
<dbReference type="GO" id="GO:0047480">
    <property type="term" value="F:UDP-N-acetylmuramoyl-tripeptide-D-alanyl-D-alanine ligase activity"/>
    <property type="evidence" value="ECO:0007669"/>
    <property type="project" value="UniProtKB-UniRule"/>
</dbReference>
<dbReference type="GO" id="GO:0008766">
    <property type="term" value="F:UDP-N-acetylmuramoylalanyl-D-glutamyl-2,6-diaminopimelate-D-alanyl-D-alanine ligase activity"/>
    <property type="evidence" value="ECO:0007669"/>
    <property type="project" value="RHEA"/>
</dbReference>
<dbReference type="GO" id="GO:0051301">
    <property type="term" value="P:cell division"/>
    <property type="evidence" value="ECO:0007669"/>
    <property type="project" value="UniProtKB-KW"/>
</dbReference>
<dbReference type="GO" id="GO:0071555">
    <property type="term" value="P:cell wall organization"/>
    <property type="evidence" value="ECO:0007669"/>
    <property type="project" value="UniProtKB-KW"/>
</dbReference>
<dbReference type="GO" id="GO:0009252">
    <property type="term" value="P:peptidoglycan biosynthetic process"/>
    <property type="evidence" value="ECO:0007669"/>
    <property type="project" value="UniProtKB-UniRule"/>
</dbReference>
<dbReference type="GO" id="GO:0008360">
    <property type="term" value="P:regulation of cell shape"/>
    <property type="evidence" value="ECO:0007669"/>
    <property type="project" value="UniProtKB-KW"/>
</dbReference>
<dbReference type="Gene3D" id="3.90.190.20">
    <property type="entry name" value="Mur ligase, C-terminal domain"/>
    <property type="match status" value="1"/>
</dbReference>
<dbReference type="Gene3D" id="3.40.1190.10">
    <property type="entry name" value="Mur-like, catalytic domain"/>
    <property type="match status" value="1"/>
</dbReference>
<dbReference type="Gene3D" id="3.40.1390.10">
    <property type="entry name" value="MurE/MurF, N-terminal domain"/>
    <property type="match status" value="1"/>
</dbReference>
<dbReference type="HAMAP" id="MF_02019">
    <property type="entry name" value="MurF"/>
    <property type="match status" value="1"/>
</dbReference>
<dbReference type="InterPro" id="IPR036565">
    <property type="entry name" value="Mur-like_cat_sf"/>
</dbReference>
<dbReference type="InterPro" id="IPR004101">
    <property type="entry name" value="Mur_ligase_C"/>
</dbReference>
<dbReference type="InterPro" id="IPR036615">
    <property type="entry name" value="Mur_ligase_C_dom_sf"/>
</dbReference>
<dbReference type="InterPro" id="IPR013221">
    <property type="entry name" value="Mur_ligase_cen"/>
</dbReference>
<dbReference type="InterPro" id="IPR000713">
    <property type="entry name" value="Mur_ligase_N"/>
</dbReference>
<dbReference type="InterPro" id="IPR051046">
    <property type="entry name" value="MurCDEF_CellWall_CoF430Synth"/>
</dbReference>
<dbReference type="InterPro" id="IPR035911">
    <property type="entry name" value="MurE/MurF_N"/>
</dbReference>
<dbReference type="InterPro" id="IPR005863">
    <property type="entry name" value="UDP-N-AcMur_synth"/>
</dbReference>
<dbReference type="NCBIfam" id="TIGR01143">
    <property type="entry name" value="murF"/>
    <property type="match status" value="1"/>
</dbReference>
<dbReference type="PANTHER" id="PTHR43024">
    <property type="entry name" value="UDP-N-ACETYLMURAMOYL-TRIPEPTIDE--D-ALANYL-D-ALANINE LIGASE"/>
    <property type="match status" value="1"/>
</dbReference>
<dbReference type="PANTHER" id="PTHR43024:SF1">
    <property type="entry name" value="UDP-N-ACETYLMURAMOYL-TRIPEPTIDE--D-ALANYL-D-ALANINE LIGASE"/>
    <property type="match status" value="1"/>
</dbReference>
<dbReference type="Pfam" id="PF01225">
    <property type="entry name" value="Mur_ligase"/>
    <property type="match status" value="1"/>
</dbReference>
<dbReference type="Pfam" id="PF02875">
    <property type="entry name" value="Mur_ligase_C"/>
    <property type="match status" value="1"/>
</dbReference>
<dbReference type="Pfam" id="PF08245">
    <property type="entry name" value="Mur_ligase_M"/>
    <property type="match status" value="1"/>
</dbReference>
<dbReference type="SUPFAM" id="SSF53623">
    <property type="entry name" value="MurD-like peptide ligases, catalytic domain"/>
    <property type="match status" value="1"/>
</dbReference>
<dbReference type="SUPFAM" id="SSF53244">
    <property type="entry name" value="MurD-like peptide ligases, peptide-binding domain"/>
    <property type="match status" value="1"/>
</dbReference>
<dbReference type="SUPFAM" id="SSF63418">
    <property type="entry name" value="MurE/MurF N-terminal domain"/>
    <property type="match status" value="1"/>
</dbReference>
<reference key="1">
    <citation type="journal article" date="2003" name="Proc. Natl. Acad. Sci. U.S.A.">
        <title>The complete genome sequence of Mycobacterium bovis.</title>
        <authorList>
            <person name="Garnier T."/>
            <person name="Eiglmeier K."/>
            <person name="Camus J.-C."/>
            <person name="Medina N."/>
            <person name="Mansoor H."/>
            <person name="Pryor M."/>
            <person name="Duthoy S."/>
            <person name="Grondin S."/>
            <person name="Lacroix C."/>
            <person name="Monsempe C."/>
            <person name="Simon S."/>
            <person name="Harris B."/>
            <person name="Atkin R."/>
            <person name="Doggett J."/>
            <person name="Mayes R."/>
            <person name="Keating L."/>
            <person name="Wheeler P.R."/>
            <person name="Parkhill J."/>
            <person name="Barrell B.G."/>
            <person name="Cole S.T."/>
            <person name="Gordon S.V."/>
            <person name="Hewinson R.G."/>
        </authorList>
    </citation>
    <scope>NUCLEOTIDE SEQUENCE [LARGE SCALE GENOMIC DNA]</scope>
    <source>
        <strain>ATCC BAA-935 / AF2122/97</strain>
    </source>
</reference>
<reference key="2">
    <citation type="journal article" date="2017" name="Genome Announc.">
        <title>Updated reference genome sequence and annotation of Mycobacterium bovis AF2122/97.</title>
        <authorList>
            <person name="Malone K.M."/>
            <person name="Farrell D."/>
            <person name="Stuber T.P."/>
            <person name="Schubert O.T."/>
            <person name="Aebersold R."/>
            <person name="Robbe-Austerman S."/>
            <person name="Gordon S.V."/>
        </authorList>
    </citation>
    <scope>NUCLEOTIDE SEQUENCE [LARGE SCALE GENOMIC DNA]</scope>
    <scope>GENOME REANNOTATION</scope>
    <source>
        <strain>ATCC BAA-935 / AF2122/97</strain>
    </source>
</reference>
<sequence length="510" mass="51633">MIELTVAQIAEIVGGAVADISPQDAAHRRVTGTVEFDSRAIGPGGLFLALPGARADGHDHAASAVAAGAAVVLAARPVGVPAIVVPPVAAPNVLAGVLEHDNDGSGAAVLAALAKLATAVAAQLVAGGLTIIGITGSSGKTSTKDLMAAVLAPLGEVVAPPGSFNNELGHPWTVLRATRRTDYLILEMAARHHGNIAALAEIAPPSIGVVLNVGTAHLGEFGSREVIAQTKAELPQAVPHSGAVVLNADDPAVAAMAKLTAARVVRVSRDNTGDVWAGPVSLDELARPRFTLHAHDAQAEVRLGVCGDHQVTNALCAAAVALECGASVEQVAAALTAAPPVSRHRMQVTTRGDGVTVIDDAYNANPDSMRAGLQALAWIAHQPEATRRSWAVLGEMAELGEDAIAEHDRIGRLAVRLDVSRLVVVGTGRSISAMHHGAVLEGAWGSGEATADHGADRTAVNVADGDAALALLRAELRPGDVVLVKASNAAGLGAVADALVADDTCGSVRP</sequence>
<keyword id="KW-0067">ATP-binding</keyword>
<keyword id="KW-0131">Cell cycle</keyword>
<keyword id="KW-0132">Cell division</keyword>
<keyword id="KW-0133">Cell shape</keyword>
<keyword id="KW-0961">Cell wall biogenesis/degradation</keyword>
<keyword id="KW-0963">Cytoplasm</keyword>
<keyword id="KW-0436">Ligase</keyword>
<keyword id="KW-0547">Nucleotide-binding</keyword>
<keyword id="KW-0573">Peptidoglycan synthesis</keyword>
<keyword id="KW-1185">Reference proteome</keyword>
<gene>
    <name evidence="1" type="primary">murF</name>
    <name type="ordered locus">BQ2027_MB2181C</name>
</gene>
<feature type="chain" id="PRO_0000101702" description="UDP-N-acetylmuramoyl-tripeptide--D-alanyl-D-alanine ligase">
    <location>
        <begin position="1"/>
        <end position="510"/>
    </location>
</feature>
<feature type="binding site" evidence="1">
    <location>
        <begin position="136"/>
        <end position="142"/>
    </location>
    <ligand>
        <name>ATP</name>
        <dbReference type="ChEBI" id="CHEBI:30616"/>
    </ligand>
</feature>
<accession>P0A5L5</accession>
<accession>A0A1R3Y0E7</accession>
<accession>O06220</accession>
<accession>X2BK26</accession>
<proteinExistence type="inferred from homology"/>
<organism>
    <name type="scientific">Mycobacterium bovis (strain ATCC BAA-935 / AF2122/97)</name>
    <dbReference type="NCBI Taxonomy" id="233413"/>
    <lineage>
        <taxon>Bacteria</taxon>
        <taxon>Bacillati</taxon>
        <taxon>Actinomycetota</taxon>
        <taxon>Actinomycetes</taxon>
        <taxon>Mycobacteriales</taxon>
        <taxon>Mycobacteriaceae</taxon>
        <taxon>Mycobacterium</taxon>
        <taxon>Mycobacterium tuberculosis complex</taxon>
    </lineage>
</organism>
<comment type="function">
    <text evidence="1">Involved in cell wall formation. Catalyzes the final step in the synthesis of UDP-N-acetylmuramoyl-pentapeptide, the precursor of murein.</text>
</comment>
<comment type="catalytic activity">
    <reaction evidence="1">
        <text>D-alanyl-D-alanine + UDP-N-acetyl-alpha-D-muramoyl-L-alanyl-gamma-D-glutamyl-meso-2,6-diaminopimelate + ATP = UDP-N-acetyl-alpha-D-muramoyl-L-alanyl-gamma-D-glutamyl-meso-2,6-diaminopimeloyl-D-alanyl-D-alanine + ADP + phosphate + H(+)</text>
        <dbReference type="Rhea" id="RHEA:28374"/>
        <dbReference type="ChEBI" id="CHEBI:15378"/>
        <dbReference type="ChEBI" id="CHEBI:30616"/>
        <dbReference type="ChEBI" id="CHEBI:43474"/>
        <dbReference type="ChEBI" id="CHEBI:57822"/>
        <dbReference type="ChEBI" id="CHEBI:61386"/>
        <dbReference type="ChEBI" id="CHEBI:83905"/>
        <dbReference type="ChEBI" id="CHEBI:456216"/>
        <dbReference type="EC" id="6.3.2.10"/>
    </reaction>
</comment>
<comment type="pathway">
    <text evidence="1">Cell wall biogenesis; peptidoglycan biosynthesis.</text>
</comment>
<comment type="subcellular location">
    <subcellularLocation>
        <location evidence="1">Cytoplasm</location>
    </subcellularLocation>
</comment>
<comment type="similarity">
    <text evidence="1">Belongs to the MurCDEF family. MurF subfamily.</text>
</comment>
<protein>
    <recommendedName>
        <fullName evidence="1">UDP-N-acetylmuramoyl-tripeptide--D-alanyl-D-alanine ligase</fullName>
        <ecNumber evidence="1">6.3.2.10</ecNumber>
    </recommendedName>
    <alternativeName>
        <fullName evidence="1">D-alanyl-D-alanine-adding enzyme</fullName>
    </alternativeName>
    <alternativeName>
        <fullName>UDP-MurNAc-pentapeptide synthetase</fullName>
    </alternativeName>
</protein>